<comment type="function">
    <text evidence="1">Involved in the modulation of the specificity of the ClpAP-mediated ATP-dependent protein degradation.</text>
</comment>
<comment type="subunit">
    <text evidence="1">Binds to the N-terminal domain of the chaperone ClpA.</text>
</comment>
<comment type="similarity">
    <text evidence="1">Belongs to the ClpS family.</text>
</comment>
<comment type="sequence caution" evidence="2">
    <conflict type="erroneous initiation">
        <sequence resource="EMBL-CDS" id="BAB72362"/>
    </conflict>
</comment>
<dbReference type="EMBL" id="BA000019">
    <property type="protein sequence ID" value="BAB72362.1"/>
    <property type="status" value="ALT_INIT"/>
    <property type="molecule type" value="Genomic_DNA"/>
</dbReference>
<dbReference type="PIR" id="AC1857">
    <property type="entry name" value="AC1857"/>
</dbReference>
<dbReference type="RefSeq" id="WP_010994580.1">
    <property type="nucleotide sequence ID" value="NZ_RSCN01000017.1"/>
</dbReference>
<dbReference type="SMR" id="Q8YZQ3"/>
<dbReference type="STRING" id="103690.gene:10492413"/>
<dbReference type="KEGG" id="ana:all0404"/>
<dbReference type="eggNOG" id="COG2127">
    <property type="taxonomic scope" value="Bacteria"/>
</dbReference>
<dbReference type="OrthoDB" id="9796933at2"/>
<dbReference type="Proteomes" id="UP000002483">
    <property type="component" value="Chromosome"/>
</dbReference>
<dbReference type="GO" id="GO:0030163">
    <property type="term" value="P:protein catabolic process"/>
    <property type="evidence" value="ECO:0007669"/>
    <property type="project" value="InterPro"/>
</dbReference>
<dbReference type="GO" id="GO:0006508">
    <property type="term" value="P:proteolysis"/>
    <property type="evidence" value="ECO:0007669"/>
    <property type="project" value="UniProtKB-UniRule"/>
</dbReference>
<dbReference type="Gene3D" id="3.30.1390.10">
    <property type="match status" value="1"/>
</dbReference>
<dbReference type="HAMAP" id="MF_00302">
    <property type="entry name" value="ClpS"/>
    <property type="match status" value="1"/>
</dbReference>
<dbReference type="InterPro" id="IPR022935">
    <property type="entry name" value="ClpS"/>
</dbReference>
<dbReference type="InterPro" id="IPR003769">
    <property type="entry name" value="ClpS_core"/>
</dbReference>
<dbReference type="InterPro" id="IPR014719">
    <property type="entry name" value="Ribosomal_bL12_C/ClpS-like"/>
</dbReference>
<dbReference type="NCBIfam" id="NF009563">
    <property type="entry name" value="PRK13019.1-3"/>
    <property type="match status" value="1"/>
</dbReference>
<dbReference type="PANTHER" id="PTHR33473:SF3">
    <property type="entry name" value="ATP-DEPENDENT CLP PROTEASE ADAPTER PROTEIN CLPS"/>
    <property type="match status" value="1"/>
</dbReference>
<dbReference type="PANTHER" id="PTHR33473">
    <property type="entry name" value="ATP-DEPENDENT CLP PROTEASE ADAPTER PROTEIN CLPS1, CHLOROPLASTIC"/>
    <property type="match status" value="1"/>
</dbReference>
<dbReference type="Pfam" id="PF02617">
    <property type="entry name" value="ClpS"/>
    <property type="match status" value="1"/>
</dbReference>
<dbReference type="SUPFAM" id="SSF54736">
    <property type="entry name" value="ClpS-like"/>
    <property type="match status" value="1"/>
</dbReference>
<sequence>MSTAPTVTPERSNQTVRKTYPNYKVIVLNDDFNTFQHVAECLVKYIPGMTGDLAWDLTNQVHYEGQAIVWVGPQEPAELYHQQLRRAGLTMAPLEAA</sequence>
<evidence type="ECO:0000255" key="1">
    <source>
        <dbReference type="HAMAP-Rule" id="MF_00302"/>
    </source>
</evidence>
<evidence type="ECO:0000305" key="2"/>
<proteinExistence type="inferred from homology"/>
<feature type="chain" id="PRO_0000215682" description="ATP-dependent Clp protease adapter protein ClpS">
    <location>
        <begin position="1"/>
        <end position="97"/>
    </location>
</feature>
<organism>
    <name type="scientific">Nostoc sp. (strain PCC 7120 / SAG 25.82 / UTEX 2576)</name>
    <dbReference type="NCBI Taxonomy" id="103690"/>
    <lineage>
        <taxon>Bacteria</taxon>
        <taxon>Bacillati</taxon>
        <taxon>Cyanobacteriota</taxon>
        <taxon>Cyanophyceae</taxon>
        <taxon>Nostocales</taxon>
        <taxon>Nostocaceae</taxon>
        <taxon>Nostoc</taxon>
    </lineage>
</organism>
<gene>
    <name evidence="1" type="primary">clpS</name>
    <name type="ordered locus">all0404</name>
</gene>
<name>CLPS_NOSS1</name>
<protein>
    <recommendedName>
        <fullName evidence="1">ATP-dependent Clp protease adapter protein ClpS</fullName>
    </recommendedName>
</protein>
<reference key="1">
    <citation type="journal article" date="2001" name="DNA Res.">
        <title>Complete genomic sequence of the filamentous nitrogen-fixing cyanobacterium Anabaena sp. strain PCC 7120.</title>
        <authorList>
            <person name="Kaneko T."/>
            <person name="Nakamura Y."/>
            <person name="Wolk C.P."/>
            <person name="Kuritz T."/>
            <person name="Sasamoto S."/>
            <person name="Watanabe A."/>
            <person name="Iriguchi M."/>
            <person name="Ishikawa A."/>
            <person name="Kawashima K."/>
            <person name="Kimura T."/>
            <person name="Kishida Y."/>
            <person name="Kohara M."/>
            <person name="Matsumoto M."/>
            <person name="Matsuno A."/>
            <person name="Muraki A."/>
            <person name="Nakazaki N."/>
            <person name="Shimpo S."/>
            <person name="Sugimoto M."/>
            <person name="Takazawa M."/>
            <person name="Yamada M."/>
            <person name="Yasuda M."/>
            <person name="Tabata S."/>
        </authorList>
    </citation>
    <scope>NUCLEOTIDE SEQUENCE [LARGE SCALE GENOMIC DNA]</scope>
    <source>
        <strain>PCC 7120 / SAG 25.82 / UTEX 2576</strain>
    </source>
</reference>
<keyword id="KW-1185">Reference proteome</keyword>
<accession>Q8YZQ3</accession>